<accession>Q0MVP0</accession>
<comment type="function">
    <text evidence="1 4 5 6">This is a copper-containing oxidase that functions in the formation of pigments such as melanins and other polyphenolic compounds (By similarity). Catalyzes the initial and rate limiting step in the cascade of reactions leading to melanin production from tyrosine. In addition to hydroxylating tyrosine to DOPA (3,4-dihydroxyphenylalanine), also catalyzes the oxidation of DOPA to DOPA-quinone (PubMed:18950728, PubMed:19101648, PubMed:6798971).</text>
</comment>
<comment type="catalytic activity">
    <reaction evidence="4 5 6 7">
        <text>2 L-dopa + O2 = 2 L-dopaquinone + 2 H2O</text>
        <dbReference type="Rhea" id="RHEA:34287"/>
        <dbReference type="ChEBI" id="CHEBI:15377"/>
        <dbReference type="ChEBI" id="CHEBI:15379"/>
        <dbReference type="ChEBI" id="CHEBI:57504"/>
        <dbReference type="ChEBI" id="CHEBI:57924"/>
        <dbReference type="EC" id="1.14.18.1"/>
    </reaction>
</comment>
<comment type="catalytic activity">
    <reaction evidence="4 5 6">
        <text>L-tyrosine + O2 = L-dopaquinone + H2O</text>
        <dbReference type="Rhea" id="RHEA:18117"/>
        <dbReference type="ChEBI" id="CHEBI:15377"/>
        <dbReference type="ChEBI" id="CHEBI:15379"/>
        <dbReference type="ChEBI" id="CHEBI:57924"/>
        <dbReference type="ChEBI" id="CHEBI:58315"/>
        <dbReference type="EC" id="1.14.18.1"/>
    </reaction>
</comment>
<comment type="cofactor">
    <cofactor evidence="12">
        <name>Cu(2+)</name>
        <dbReference type="ChEBI" id="CHEBI:29036"/>
    </cofactor>
    <text evidence="2">Binds 2 copper ions per subunit.</text>
</comment>
<comment type="activity regulation">
    <text evidence="6 7">Activated by trypsin, chymotrypsin and subtilisin (PubMed:6798971, PubMed:6814426). Activated by alpha-chymotrypsin, thermolysin and Pronase. Inhibited by its product L-DOPA and tyrosine (PubMed:6814426).</text>
</comment>
<comment type="subunit">
    <text evidence="6 7">Active tyrosinase has been found as a homodimer and homotetramer.</text>
</comment>
<comment type="subcellular location">
    <subcellularLocation>
        <location evidence="4 5">Melanosome membrane</location>
        <topology evidence="3">Single-pass type I membrane protein</topology>
    </subcellularLocation>
</comment>
<comment type="tissue specificity">
    <text evidence="4 5 6 7">Frog skin.</text>
</comment>
<comment type="induction">
    <text evidence="4">By seasons. Highest levels in the winter time and lowest during the summer (at protein level).</text>
</comment>
<comment type="similarity">
    <text evidence="11">Belongs to the tyrosinase family.</text>
</comment>
<feature type="signal peptide" evidence="3">
    <location>
        <begin position="1"/>
        <end position="22"/>
    </location>
</feature>
<feature type="chain" id="PRO_5004175126" description="Tyrosinase" evidence="3">
    <location>
        <begin position="23"/>
        <end position="532"/>
    </location>
</feature>
<feature type="topological domain" description="Lumenal, melanosome" evidence="3">
    <location>
        <begin position="23"/>
        <end position="479"/>
    </location>
</feature>
<feature type="transmembrane region" description="Helical" evidence="3">
    <location>
        <begin position="480"/>
        <end position="500"/>
    </location>
</feature>
<feature type="topological domain" description="Cytoplasmic" evidence="3">
    <location>
        <begin position="501"/>
        <end position="532"/>
    </location>
</feature>
<feature type="binding site" evidence="2">
    <location>
        <position position="184"/>
    </location>
    <ligand>
        <name>Cu cation</name>
        <dbReference type="ChEBI" id="CHEBI:23378"/>
        <label>A</label>
    </ligand>
</feature>
<feature type="binding site" evidence="2">
    <location>
        <position position="206"/>
    </location>
    <ligand>
        <name>Cu cation</name>
        <dbReference type="ChEBI" id="CHEBI:23378"/>
        <label>A</label>
    </ligand>
</feature>
<feature type="binding site" evidence="2">
    <location>
        <position position="215"/>
    </location>
    <ligand>
        <name>Cu cation</name>
        <dbReference type="ChEBI" id="CHEBI:23378"/>
        <label>A</label>
    </ligand>
</feature>
<feature type="binding site" evidence="2">
    <location>
        <position position="367"/>
    </location>
    <ligand>
        <name>Cu cation</name>
        <dbReference type="ChEBI" id="CHEBI:23378"/>
        <label>B</label>
    </ligand>
</feature>
<feature type="binding site" evidence="2">
    <location>
        <position position="371"/>
    </location>
    <ligand>
        <name>Cu cation</name>
        <dbReference type="ChEBI" id="CHEBI:23378"/>
        <label>B</label>
    </ligand>
</feature>
<feature type="binding site" evidence="2">
    <location>
        <position position="394"/>
    </location>
    <ligand>
        <name>Cu cation</name>
        <dbReference type="ChEBI" id="CHEBI:23378"/>
        <label>B</label>
    </ligand>
</feature>
<feature type="glycosylation site" description="N-linked (GlcNAc...) asparagine" evidence="3">
    <location>
        <position position="90"/>
    </location>
</feature>
<feature type="glycosylation site" description="N-linked (GlcNAc...) asparagine" evidence="3">
    <location>
        <position position="115"/>
    </location>
</feature>
<feature type="glycosylation site" description="N-linked (GlcNAc...) asparagine" evidence="3">
    <location>
        <position position="165"/>
    </location>
</feature>
<feature type="glycosylation site" description="N-linked (GlcNAc...) asparagine" evidence="3">
    <location>
        <position position="234"/>
    </location>
</feature>
<feature type="glycosylation site" description="N-linked (GlcNAc...) asparagine" evidence="3">
    <location>
        <position position="341"/>
    </location>
</feature>
<feature type="glycosylation site" description="N-linked (GlcNAc...) asparagine" evidence="3">
    <location>
        <position position="375"/>
    </location>
</feature>
<protein>
    <recommendedName>
        <fullName evidence="11">Tyrosinase</fullName>
    </recommendedName>
    <alternativeName>
        <fullName evidence="10">Epidermis tyrosinase</fullName>
    </alternativeName>
    <alternativeName>
        <fullName evidence="9">Monophenol monooxygenase</fullName>
    </alternativeName>
    <alternativeName>
        <fullName evidence="8 9 13">Skin tyrosinase</fullName>
        <ecNumber evidence="4 5 6 7">1.14.18.1</ecNumber>
    </alternativeName>
</protein>
<sequence>MESTTVLLAASTLLLVLHASYGQFPRACSTAQVLLSKECCPVWPGDNSSCGEVSGRGVCQDVVPSNSPVGAQFPFSGIDDRENWPIVFYNRTCQCQGNFMGYNCGECRFGYTGPNCTVRRNMIRKEIFRMTTAEKDKFIAYLNLAKRTISQDYVISTGTYEQMNNGSNPMFADINVYDLFVWLHYYASRDAFLEDGSVWANIDFAHEAPGFPPWHRFFLLLWEREIQKVAADDNFTIPFWDWRDAQQCDLCTDEFFGGTHPTSNNLLSPASFFSSWQVICSQPEEYNRLRIICNGTNEGPLLRSPGRHDRNRTPRLPTSADVEACLSLTDYETGAMDRFANFSFRNTLEGYAVPASGIANRSQSNMHNSLHVFMNGSMSNVQGSANDPIFVLHHAFVDSLFEQWLRRHQPSLDVYPEANAPVGHNREYNMVPFIPLFTNGEFFVQSRDLGYDYDYLAESGSIEDFLLPYLEQARQIWQWLLGAAVVGGLVTAVIATIISLTCRRKRRTKTSEETRPLLMEAEDYHATYQSNL</sequence>
<gene>
    <name evidence="13" type="primary">Tyr</name>
</gene>
<proteinExistence type="evidence at protein level"/>
<evidence type="ECO:0000250" key="1">
    <source>
        <dbReference type="UniProtKB" id="P11344"/>
    </source>
</evidence>
<evidence type="ECO:0000250" key="2">
    <source>
        <dbReference type="UniProtKB" id="Q9ZP19"/>
    </source>
</evidence>
<evidence type="ECO:0000255" key="3"/>
<evidence type="ECO:0000269" key="4">
    <source>
    </source>
</evidence>
<evidence type="ECO:0000269" key="5">
    <source>
    </source>
</evidence>
<evidence type="ECO:0000269" key="6">
    <source>
    </source>
</evidence>
<evidence type="ECO:0000269" key="7">
    <source>
    </source>
</evidence>
<evidence type="ECO:0000303" key="8">
    <source>
    </source>
</evidence>
<evidence type="ECO:0000303" key="9">
    <source>
    </source>
</evidence>
<evidence type="ECO:0000303" key="10">
    <source>
    </source>
</evidence>
<evidence type="ECO:0000305" key="11"/>
<evidence type="ECO:0000305" key="12">
    <source>
    </source>
</evidence>
<evidence type="ECO:0000312" key="13">
    <source>
        <dbReference type="EMBL" id="ABH08966.1"/>
    </source>
</evidence>
<reference evidence="13" key="1">
    <citation type="journal article" date="2009" name="Comp. Biochem. Physiol.">
        <title>Molecular cloning and biochemical characterization of the skin tyrosinase from Rana esculenta L.</title>
        <authorList>
            <person name="Zanna P.T."/>
            <person name="Maida I."/>
            <person name="Arciuli M."/>
            <person name="Jimenez-Cervantes C."/>
            <person name="Garcia-Borron J.C."/>
            <person name="Cicero R."/>
            <person name="Guida G."/>
        </authorList>
    </citation>
    <scope>NUCLEOTIDE SEQUENCE [MRNA]</scope>
    <scope>FUNCTION</scope>
    <scope>CATALYTIC ACTIVITY</scope>
    <scope>COFACTOR</scope>
    <scope>SUBCELLULAR LOCATION</scope>
    <scope>TISSUE SPECIFICITY</scope>
    <source>
        <tissue evidence="9">Skin</tissue>
    </source>
</reference>
<reference key="2">
    <citation type="journal article" date="1981" name="Biochem. J.">
        <title>Subunit interactions in tyrosinase from frog epidermis in immobilized enzyme systems.</title>
        <authorList>
            <person name="Iborra J.L."/>
            <person name="Ferragut J.A."/>
            <person name="Lozano J.A."/>
        </authorList>
    </citation>
    <scope>FUNCTION</scope>
    <scope>CATALYTIC ACTIVITY</scope>
    <scope>ACTIVITY REGULATION</scope>
    <scope>SUBUNIT</scope>
    <scope>TISSUE SPECIFICITY</scope>
</reference>
<reference key="3">
    <citation type="journal article" date="1982" name="Biochem. J.">
        <title>The process for the activation of frog epidermis pro-tyrosinase.</title>
        <authorList>
            <person name="Penafiel R."/>
            <person name="Galindo J.D."/>
            <person name="Pedreno E."/>
            <person name="Lozano J.A."/>
        </authorList>
    </citation>
    <scope>CATALYTIC ACTIVITY</scope>
    <scope>ACTIVITY REGULATION</scope>
    <scope>SUBUNIT</scope>
    <scope>TISSUE SPECIFICITY</scope>
</reference>
<reference key="4">
    <citation type="journal article" date="2009" name="Comp. Biochem. Physiol.">
        <title>Seasonal variations of Rana esculenta L. skin tyrosinase.</title>
        <authorList>
            <person name="Maida I."/>
            <person name="Arciuli M."/>
            <person name="Guida G."/>
            <person name="Zanna P.T."/>
            <person name="Cicero R."/>
        </authorList>
    </citation>
    <scope>FUNCTION</scope>
    <scope>CATALYTIC ACTIVITY</scope>
    <scope>SUBCELLULAR LOCATION</scope>
    <scope>TISSUE SPECIFICITY</scope>
    <scope>INDUCTION</scope>
</reference>
<organism evidence="13">
    <name type="scientific">Pelophylax lessonae</name>
    <name type="common">Pool frog</name>
    <name type="synonym">Rana lessonae</name>
    <dbReference type="NCBI Taxonomy" id="45623"/>
    <lineage>
        <taxon>Eukaryota</taxon>
        <taxon>Metazoa</taxon>
        <taxon>Chordata</taxon>
        <taxon>Craniata</taxon>
        <taxon>Vertebrata</taxon>
        <taxon>Euteleostomi</taxon>
        <taxon>Amphibia</taxon>
        <taxon>Batrachia</taxon>
        <taxon>Anura</taxon>
        <taxon>Neobatrachia</taxon>
        <taxon>Ranoidea</taxon>
        <taxon>Ranidae</taxon>
        <taxon>Pelophylax</taxon>
    </lineage>
</organism>
<dbReference type="EC" id="1.14.18.1" evidence="4 5 6 7"/>
<dbReference type="EMBL" id="DQ841551">
    <property type="protein sequence ID" value="ABH08966.1"/>
    <property type="molecule type" value="mRNA"/>
</dbReference>
<dbReference type="SMR" id="Q0MVP0"/>
<dbReference type="GlyCosmos" id="Q0MVP0">
    <property type="glycosylation" value="6 sites, No reported glycans"/>
</dbReference>
<dbReference type="GO" id="GO:0042470">
    <property type="term" value="C:melanosome"/>
    <property type="evidence" value="ECO:0000314"/>
    <property type="project" value="UniProtKB"/>
</dbReference>
<dbReference type="GO" id="GO:0033162">
    <property type="term" value="C:melanosome membrane"/>
    <property type="evidence" value="ECO:0007669"/>
    <property type="project" value="UniProtKB-SubCell"/>
</dbReference>
<dbReference type="GO" id="GO:0005507">
    <property type="term" value="F:copper ion binding"/>
    <property type="evidence" value="ECO:0000314"/>
    <property type="project" value="UniProtKB"/>
</dbReference>
<dbReference type="GO" id="GO:0042803">
    <property type="term" value="F:protein homodimerization activity"/>
    <property type="evidence" value="ECO:0000314"/>
    <property type="project" value="UniProtKB"/>
</dbReference>
<dbReference type="GO" id="GO:0004503">
    <property type="term" value="F:tyrosinase activity"/>
    <property type="evidence" value="ECO:0000314"/>
    <property type="project" value="UniProtKB"/>
</dbReference>
<dbReference type="GO" id="GO:0006583">
    <property type="term" value="P:melanin biosynthetic process from tyrosine"/>
    <property type="evidence" value="ECO:0000314"/>
    <property type="project" value="UniProtKB"/>
</dbReference>
<dbReference type="GO" id="GO:0043473">
    <property type="term" value="P:pigmentation"/>
    <property type="evidence" value="ECO:0007669"/>
    <property type="project" value="TreeGrafter"/>
</dbReference>
<dbReference type="GO" id="GO:0051289">
    <property type="term" value="P:protein homotetramerization"/>
    <property type="evidence" value="ECO:0000314"/>
    <property type="project" value="UniProtKB"/>
</dbReference>
<dbReference type="FunFam" id="1.10.1280.10:FF:000003">
    <property type="entry name" value="Tyrosinase"/>
    <property type="match status" value="1"/>
</dbReference>
<dbReference type="Gene3D" id="1.10.1280.10">
    <property type="entry name" value="Di-copper center containing domain from catechol oxidase"/>
    <property type="match status" value="1"/>
</dbReference>
<dbReference type="InterPro" id="IPR008922">
    <property type="entry name" value="Di-copper_centre_dom_sf"/>
</dbReference>
<dbReference type="InterPro" id="IPR050316">
    <property type="entry name" value="Tyrosinase/Hemocyanin"/>
</dbReference>
<dbReference type="InterPro" id="IPR002227">
    <property type="entry name" value="Tyrosinase_Cu-bd"/>
</dbReference>
<dbReference type="PANTHER" id="PTHR11474:SF135">
    <property type="entry name" value="LOC100125152 PROTEIN"/>
    <property type="match status" value="1"/>
</dbReference>
<dbReference type="PANTHER" id="PTHR11474">
    <property type="entry name" value="TYROSINASE FAMILY MEMBER"/>
    <property type="match status" value="1"/>
</dbReference>
<dbReference type="Pfam" id="PF00264">
    <property type="entry name" value="Tyrosinase"/>
    <property type="match status" value="1"/>
</dbReference>
<dbReference type="PRINTS" id="PR00092">
    <property type="entry name" value="TYROSINASE"/>
</dbReference>
<dbReference type="SUPFAM" id="SSF48056">
    <property type="entry name" value="Di-copper centre-containing domain"/>
    <property type="match status" value="1"/>
</dbReference>
<dbReference type="PROSITE" id="PS00497">
    <property type="entry name" value="TYROSINASE_1"/>
    <property type="match status" value="1"/>
</dbReference>
<dbReference type="PROSITE" id="PS00498">
    <property type="entry name" value="TYROSINASE_2"/>
    <property type="match status" value="1"/>
</dbReference>
<keyword id="KW-0186">Copper</keyword>
<keyword id="KW-0325">Glycoprotein</keyword>
<keyword id="KW-0470">Melanin biosynthesis</keyword>
<keyword id="KW-0472">Membrane</keyword>
<keyword id="KW-0479">Metal-binding</keyword>
<keyword id="KW-0503">Monooxygenase</keyword>
<keyword id="KW-0560">Oxidoreductase</keyword>
<keyword id="KW-0732">Signal</keyword>
<keyword id="KW-0812">Transmembrane</keyword>
<keyword id="KW-1133">Transmembrane helix</keyword>
<name>TYRO_PELLE</name>